<gene>
    <name evidence="24" type="primary">Khdrbs1</name>
</gene>
<protein>
    <recommendedName>
        <fullName>KH domain-containing, RNA-binding, signal transduction-associated protein 1</fullName>
    </recommendedName>
    <alternativeName>
        <fullName>GAP-associated tyrosine phosphoprotein p62</fullName>
    </alternativeName>
    <alternativeName>
        <fullName>Src-associated in mitosis 68 kDa protein</fullName>
        <shortName>Sam68</shortName>
    </alternativeName>
    <alternativeName>
        <fullName>p21 Ras GTPase-activating protein-associated p62</fullName>
    </alternativeName>
    <alternativeName>
        <fullName>p68</fullName>
    </alternativeName>
</protein>
<reference evidence="19 21" key="1">
    <citation type="journal article" date="1995" name="Gene">
        <title>Purification and cDNA sequence of a murine protein homologous to the human p62 tyrosine phosphoprotein that associates with the Ras GTPase-activating protein p120 GAP.</title>
        <authorList>
            <person name="Agger R."/>
            <person name="Freimuth P."/>
        </authorList>
    </citation>
    <scope>NUCLEOTIDE SEQUENCE [MRNA]</scope>
    <scope>PROTEIN SEQUENCE OF 103-120 AND 139-150</scope>
    <source>
        <strain evidence="21">BALB/c X DBA/2</strain>
        <tissue evidence="16">Dendritic cell</tissue>
    </source>
</reference>
<reference evidence="19 20" key="2">
    <citation type="journal article" date="1995" name="Mol. Cell. Biol.">
        <title>Association of p62, a multifunctional SH2- and SH3-domain-binding protein, with src family tyrosine kinases, Grb2, and phospholipase C gamma-1.</title>
        <authorList>
            <person name="Richard S."/>
            <person name="Yu D."/>
            <person name="Blumer K.J."/>
            <person name="Hausladen D."/>
            <person name="Olszowy M.W."/>
            <person name="Connelly P.A."/>
            <person name="Shaw A.S."/>
        </authorList>
    </citation>
    <scope>NUCLEOTIDE SEQUENCE [MRNA]</scope>
    <scope>INTERACTION WITH FYN; GRB2 AND PLCG1</scope>
    <source>
        <tissue evidence="20">Thymus</tissue>
    </source>
</reference>
<reference evidence="23" key="3">
    <citation type="journal article" date="2005" name="Science">
        <title>The transcriptional landscape of the mammalian genome.</title>
        <authorList>
            <person name="Carninci P."/>
            <person name="Kasukawa T."/>
            <person name="Katayama S."/>
            <person name="Gough J."/>
            <person name="Frith M.C."/>
            <person name="Maeda N."/>
            <person name="Oyama R."/>
            <person name="Ravasi T."/>
            <person name="Lenhard B."/>
            <person name="Wells C."/>
            <person name="Kodzius R."/>
            <person name="Shimokawa K."/>
            <person name="Bajic V.B."/>
            <person name="Brenner S.E."/>
            <person name="Batalov S."/>
            <person name="Forrest A.R."/>
            <person name="Zavolan M."/>
            <person name="Davis M.J."/>
            <person name="Wilming L.G."/>
            <person name="Aidinis V."/>
            <person name="Allen J.E."/>
            <person name="Ambesi-Impiombato A."/>
            <person name="Apweiler R."/>
            <person name="Aturaliya R.N."/>
            <person name="Bailey T.L."/>
            <person name="Bansal M."/>
            <person name="Baxter L."/>
            <person name="Beisel K.W."/>
            <person name="Bersano T."/>
            <person name="Bono H."/>
            <person name="Chalk A.M."/>
            <person name="Chiu K.P."/>
            <person name="Choudhary V."/>
            <person name="Christoffels A."/>
            <person name="Clutterbuck D.R."/>
            <person name="Crowe M.L."/>
            <person name="Dalla E."/>
            <person name="Dalrymple B.P."/>
            <person name="de Bono B."/>
            <person name="Della Gatta G."/>
            <person name="di Bernardo D."/>
            <person name="Down T."/>
            <person name="Engstrom P."/>
            <person name="Fagiolini M."/>
            <person name="Faulkner G."/>
            <person name="Fletcher C.F."/>
            <person name="Fukushima T."/>
            <person name="Furuno M."/>
            <person name="Futaki S."/>
            <person name="Gariboldi M."/>
            <person name="Georgii-Hemming P."/>
            <person name="Gingeras T.R."/>
            <person name="Gojobori T."/>
            <person name="Green R.E."/>
            <person name="Gustincich S."/>
            <person name="Harbers M."/>
            <person name="Hayashi Y."/>
            <person name="Hensch T.K."/>
            <person name="Hirokawa N."/>
            <person name="Hill D."/>
            <person name="Huminiecki L."/>
            <person name="Iacono M."/>
            <person name="Ikeo K."/>
            <person name="Iwama A."/>
            <person name="Ishikawa T."/>
            <person name="Jakt M."/>
            <person name="Kanapin A."/>
            <person name="Katoh M."/>
            <person name="Kawasawa Y."/>
            <person name="Kelso J."/>
            <person name="Kitamura H."/>
            <person name="Kitano H."/>
            <person name="Kollias G."/>
            <person name="Krishnan S.P."/>
            <person name="Kruger A."/>
            <person name="Kummerfeld S.K."/>
            <person name="Kurochkin I.V."/>
            <person name="Lareau L.F."/>
            <person name="Lazarevic D."/>
            <person name="Lipovich L."/>
            <person name="Liu J."/>
            <person name="Liuni S."/>
            <person name="McWilliam S."/>
            <person name="Madan Babu M."/>
            <person name="Madera M."/>
            <person name="Marchionni L."/>
            <person name="Matsuda H."/>
            <person name="Matsuzawa S."/>
            <person name="Miki H."/>
            <person name="Mignone F."/>
            <person name="Miyake S."/>
            <person name="Morris K."/>
            <person name="Mottagui-Tabar S."/>
            <person name="Mulder N."/>
            <person name="Nakano N."/>
            <person name="Nakauchi H."/>
            <person name="Ng P."/>
            <person name="Nilsson R."/>
            <person name="Nishiguchi S."/>
            <person name="Nishikawa S."/>
            <person name="Nori F."/>
            <person name="Ohara O."/>
            <person name="Okazaki Y."/>
            <person name="Orlando V."/>
            <person name="Pang K.C."/>
            <person name="Pavan W.J."/>
            <person name="Pavesi G."/>
            <person name="Pesole G."/>
            <person name="Petrovsky N."/>
            <person name="Piazza S."/>
            <person name="Reed J."/>
            <person name="Reid J.F."/>
            <person name="Ring B.Z."/>
            <person name="Ringwald M."/>
            <person name="Rost B."/>
            <person name="Ruan Y."/>
            <person name="Salzberg S.L."/>
            <person name="Sandelin A."/>
            <person name="Schneider C."/>
            <person name="Schoenbach C."/>
            <person name="Sekiguchi K."/>
            <person name="Semple C.A."/>
            <person name="Seno S."/>
            <person name="Sessa L."/>
            <person name="Sheng Y."/>
            <person name="Shibata Y."/>
            <person name="Shimada H."/>
            <person name="Shimada K."/>
            <person name="Silva D."/>
            <person name="Sinclair B."/>
            <person name="Sperling S."/>
            <person name="Stupka E."/>
            <person name="Sugiura K."/>
            <person name="Sultana R."/>
            <person name="Takenaka Y."/>
            <person name="Taki K."/>
            <person name="Tammoja K."/>
            <person name="Tan S.L."/>
            <person name="Tang S."/>
            <person name="Taylor M.S."/>
            <person name="Tegner J."/>
            <person name="Teichmann S.A."/>
            <person name="Ueda H.R."/>
            <person name="van Nimwegen E."/>
            <person name="Verardo R."/>
            <person name="Wei C.L."/>
            <person name="Yagi K."/>
            <person name="Yamanishi H."/>
            <person name="Zabarovsky E."/>
            <person name="Zhu S."/>
            <person name="Zimmer A."/>
            <person name="Hide W."/>
            <person name="Bult C."/>
            <person name="Grimmond S.M."/>
            <person name="Teasdale R.D."/>
            <person name="Liu E.T."/>
            <person name="Brusic V."/>
            <person name="Quackenbush J."/>
            <person name="Wahlestedt C."/>
            <person name="Mattick J.S."/>
            <person name="Hume D.A."/>
            <person name="Kai C."/>
            <person name="Sasaki D."/>
            <person name="Tomaru Y."/>
            <person name="Fukuda S."/>
            <person name="Kanamori-Katayama M."/>
            <person name="Suzuki M."/>
            <person name="Aoki J."/>
            <person name="Arakawa T."/>
            <person name="Iida J."/>
            <person name="Imamura K."/>
            <person name="Itoh M."/>
            <person name="Kato T."/>
            <person name="Kawaji H."/>
            <person name="Kawagashira N."/>
            <person name="Kawashima T."/>
            <person name="Kojima M."/>
            <person name="Kondo S."/>
            <person name="Konno H."/>
            <person name="Nakano K."/>
            <person name="Ninomiya N."/>
            <person name="Nishio T."/>
            <person name="Okada M."/>
            <person name="Plessy C."/>
            <person name="Shibata K."/>
            <person name="Shiraki T."/>
            <person name="Suzuki S."/>
            <person name="Tagami M."/>
            <person name="Waki K."/>
            <person name="Watahiki A."/>
            <person name="Okamura-Oho Y."/>
            <person name="Suzuki H."/>
            <person name="Kawai J."/>
            <person name="Hayashizaki Y."/>
        </authorList>
    </citation>
    <scope>NUCLEOTIDE SEQUENCE [LARGE SCALE MRNA]</scope>
    <source>
        <strain evidence="23">C57BL/6J</strain>
        <tissue>Bone marrow</tissue>
        <tissue evidence="23">Pancreas</tissue>
    </source>
</reference>
<reference key="4">
    <citation type="journal article" date="2009" name="PLoS Biol.">
        <title>Lineage-specific biology revealed by a finished genome assembly of the mouse.</title>
        <authorList>
            <person name="Church D.M."/>
            <person name="Goodstadt L."/>
            <person name="Hillier L.W."/>
            <person name="Zody M.C."/>
            <person name="Goldstein S."/>
            <person name="She X."/>
            <person name="Bult C.J."/>
            <person name="Agarwala R."/>
            <person name="Cherry J.L."/>
            <person name="DiCuccio M."/>
            <person name="Hlavina W."/>
            <person name="Kapustin Y."/>
            <person name="Meric P."/>
            <person name="Maglott D."/>
            <person name="Birtle Z."/>
            <person name="Marques A.C."/>
            <person name="Graves T."/>
            <person name="Zhou S."/>
            <person name="Teague B."/>
            <person name="Potamousis K."/>
            <person name="Churas C."/>
            <person name="Place M."/>
            <person name="Herschleb J."/>
            <person name="Runnheim R."/>
            <person name="Forrest D."/>
            <person name="Amos-Landgraf J."/>
            <person name="Schwartz D.C."/>
            <person name="Cheng Z."/>
            <person name="Lindblad-Toh K."/>
            <person name="Eichler E.E."/>
            <person name="Ponting C.P."/>
        </authorList>
    </citation>
    <scope>NUCLEOTIDE SEQUENCE [LARGE SCALE GENOMIC DNA]</scope>
    <source>
        <strain>C57BL/6J</strain>
    </source>
</reference>
<reference evidence="22" key="5">
    <citation type="journal article" date="2004" name="Genome Res.">
        <title>The status, quality, and expansion of the NIH full-length cDNA project: the Mammalian Gene Collection (MGC).</title>
        <authorList>
            <consortium name="The MGC Project Team"/>
        </authorList>
    </citation>
    <scope>NUCLEOTIDE SEQUENCE [LARGE SCALE MRNA]</scope>
    <source>
        <strain evidence="22">FVB/N</strain>
        <tissue evidence="22">Mammary gland</tissue>
    </source>
</reference>
<reference evidence="19" key="6">
    <citation type="journal article" date="1994" name="Nature">
        <title>A target for Src in mitosis.</title>
        <authorList>
            <person name="Fumagalli S."/>
            <person name="Totty N.F."/>
            <person name="Hsuan J.J."/>
            <person name="Courtneidge S.A."/>
        </authorList>
    </citation>
    <scope>PROTEIN SEQUENCE OF 57-71; 103-131; 139-152; 158-165; 222-230; 273-282 AND 433-443</scope>
    <scope>FUNCTION</scope>
    <scope>PHOSPHORYLATION AT SER-113</scope>
    <scope>INTERACTION WITH SRC</scope>
</reference>
<reference evidence="19" key="7">
    <citation type="journal article" date="1997" name="Mol. Cell. Biol.">
        <title>Self-association of the single-KH-domain family members Sam68, GRP33, GLD-1, and Qk1: role of the KH domain.</title>
        <authorList>
            <person name="Chen T."/>
            <person name="Damaj B.B."/>
            <person name="Herrera C."/>
            <person name="Lasko P."/>
            <person name="Richard S."/>
        </authorList>
    </citation>
    <scope>FUNCTION</scope>
    <scope>RNA-BINDING</scope>
    <scope>HOMOOLIGOMERIZATION</scope>
</reference>
<reference key="8">
    <citation type="journal article" date="1999" name="Proc. Natl. Acad. Sci. U.S.A.">
        <title>Characterization of Sam68-like mammalian proteins SLM-1 and SLM-2: SLM-1 is a Src substrate during mitosis.</title>
        <authorList>
            <person name="Di Fruscio M."/>
            <person name="Chen T."/>
            <person name="Richard S."/>
        </authorList>
    </citation>
    <scope>INTERACTION WITH FYN; PLCG1; GRB2; RASA1; KHDRBS2 AND KHDRBS3</scope>
    <source>
        <tissue>Brain</tissue>
    </source>
</reference>
<reference key="9">
    <citation type="journal article" date="2002" name="Mol. Cancer Res.">
        <title>Physical and functional interaction between the transcriptional cofactor CBP and the KH domain protein Sam68.</title>
        <authorList>
            <person name="Hong W."/>
            <person name="Resnick R.J."/>
            <person name="Rakowski C."/>
            <person name="Shalloway D."/>
            <person name="Taylor S.J."/>
            <person name="Blobel G.A."/>
        </authorList>
    </citation>
    <scope>FUNCTION</scope>
    <scope>SUBCELLULAR LOCATION</scope>
    <scope>INTERACTION WITH CBP</scope>
</reference>
<reference key="10">
    <citation type="journal article" date="2002" name="Nature">
        <title>Signal-dependent regulation of splicing via phosphorylation of Sam68.</title>
        <authorList>
            <person name="Matter N."/>
            <person name="Herrlich P."/>
            <person name="Koenig H."/>
        </authorList>
    </citation>
    <scope>FUNCTION</scope>
    <scope>PHOSPHORYLATION AT SER-58; THR-71 AND THR-84</scope>
    <scope>MUTAGENESIS OF SER-58; THR-71 AND THR-84</scope>
</reference>
<reference key="11">
    <citation type="journal article" date="2003" name="Mol. Biol. Cell">
        <title>Sam68 RNA binding protein is an in vivo substrate for protein arginine N-methyltransferase 1.</title>
        <authorList>
            <person name="Cote J."/>
            <person name="Boisvert F.-M."/>
            <person name="Boulanger M.-C."/>
            <person name="Bedford M.T."/>
            <person name="Richard S."/>
        </authorList>
    </citation>
    <scope>INTERACTION WITH PRMT1</scope>
</reference>
<reference key="12">
    <citation type="journal article" date="2009" name="BMC Mol. Biol.">
        <title>The STAR RNA binding proteins GLD-1, QKI, SAM68 and SLM-2 bind bipartite RNA motifs.</title>
        <authorList>
            <person name="Galarneau A."/>
            <person name="Richard S."/>
        </authorList>
    </citation>
    <scope>RNA-BINDING</scope>
</reference>
<reference key="13">
    <citation type="journal article" date="2010" name="Cell">
        <title>A tissue-specific atlas of mouse protein phosphorylation and expression.</title>
        <authorList>
            <person name="Huttlin E.L."/>
            <person name="Jedrychowski M.P."/>
            <person name="Elias J.E."/>
            <person name="Goswami T."/>
            <person name="Rad R."/>
            <person name="Beausoleil S.A."/>
            <person name="Villen J."/>
            <person name="Haas W."/>
            <person name="Sowa M.E."/>
            <person name="Gygi S.P."/>
        </authorList>
    </citation>
    <scope>IDENTIFICATION BY MASS SPECTROMETRY [LARGE SCALE ANALYSIS]</scope>
    <source>
        <tissue>Heart</tissue>
        <tissue>Kidney</tissue>
        <tissue>Liver</tissue>
        <tissue>Lung</tissue>
        <tissue>Pancreas</tissue>
        <tissue>Spleen</tissue>
        <tissue>Testis</tissue>
    </source>
</reference>
<reference key="14">
    <citation type="journal article" date="2011" name="Cell">
        <title>SAM68 regulates neuronal activity-dependent alternative splicing of neurexin-1.</title>
        <authorList>
            <person name="Iijima T."/>
            <person name="Wu K."/>
            <person name="Witte H."/>
            <person name="Hanno-Iijima Y."/>
            <person name="Glatter T."/>
            <person name="Richard S."/>
            <person name="Scheiffele P."/>
        </authorList>
    </citation>
    <scope>FUNCTION</scope>
    <scope>TISSUE SPECIFICITY</scope>
    <scope>DEVELOPMENTAL STAGE</scope>
</reference>
<reference key="15">
    <citation type="journal article" date="2013" name="Mol. Cell">
        <title>SIRT5-mediated lysine desuccinylation impacts diverse metabolic pathways.</title>
        <authorList>
            <person name="Park J."/>
            <person name="Chen Y."/>
            <person name="Tishkoff D.X."/>
            <person name="Peng C."/>
            <person name="Tan M."/>
            <person name="Dai L."/>
            <person name="Xie Z."/>
            <person name="Zhang Y."/>
            <person name="Zwaans B.M."/>
            <person name="Skinner M.E."/>
            <person name="Lombard D.B."/>
            <person name="Zhao Y."/>
        </authorList>
    </citation>
    <scope>ACETYLATION [LARGE SCALE ANALYSIS] AT LYS-21</scope>
    <scope>IDENTIFICATION BY MASS SPECTROMETRY [LARGE SCALE ANALYSIS]</scope>
    <source>
        <tissue>Embryonic fibroblast</tissue>
    </source>
</reference>
<reference key="16">
    <citation type="journal article" date="2013" name="PLoS Genet.">
        <title>The tissue-specific RNA binding protein T-STAR controls regional splicing patterns of neurexin pre-mRNAs in the brain.</title>
        <authorList>
            <person name="Ehrmann I."/>
            <person name="Dalgliesh C."/>
            <person name="Liu Y."/>
            <person name="Danilenko M."/>
            <person name="Crosier M."/>
            <person name="Overman L."/>
            <person name="Arthur H.M."/>
            <person name="Lindsay S."/>
            <person name="Clowry G.J."/>
            <person name="Venables J.P."/>
            <person name="Fort P."/>
            <person name="Elliott D.J."/>
        </authorList>
    </citation>
    <scope>MUTAGENESIS OF VAL-229</scope>
</reference>
<reference key="17">
    <citation type="journal article" date="2014" name="J. Cell Biol.">
        <title>Neuronal cell type-specific alternative splicing is regulated by the KH domain protein SLM1.</title>
        <authorList>
            <person name="Iijima T."/>
            <person name="Iijima Y."/>
            <person name="Witte H."/>
            <person name="Scheiffele P."/>
        </authorList>
    </citation>
    <scope>FUNCTION</scope>
    <scope>INTERACTION WITH KHDRBS2</scope>
</reference>
<reference key="18">
    <citation type="journal article" date="2014" name="Mol. Cell. Proteomics">
        <title>Immunoaffinity enrichment and mass spectrometry analysis of protein methylation.</title>
        <authorList>
            <person name="Guo A."/>
            <person name="Gu H."/>
            <person name="Zhou J."/>
            <person name="Mulhern D."/>
            <person name="Wang Y."/>
            <person name="Lee K.A."/>
            <person name="Yang V."/>
            <person name="Aguiar M."/>
            <person name="Kornhauser J."/>
            <person name="Jia X."/>
            <person name="Ren J."/>
            <person name="Beausoleil S.A."/>
            <person name="Silva J.C."/>
            <person name="Vemulapalli V."/>
            <person name="Bedford M.T."/>
            <person name="Comb M.J."/>
        </authorList>
    </citation>
    <scope>METHYLATION [LARGE SCALE ANALYSIS] AT ARG-282; ARG-284; ARG-291 AND ARG-331</scope>
    <scope>IDENTIFICATION BY MASS SPECTROMETRY [LARGE SCALE ANALYSIS]</scope>
    <source>
        <tissue>Brain</tissue>
        <tissue>Embryo</tissue>
    </source>
</reference>
<name>KHDR1_MOUSE</name>
<accession>Q60749</accession>
<accession>A2ACH3</accession>
<accession>B2KG38</accession>
<accession>Q3U8T3</accession>
<accession>Q60735</accession>
<accession>Q7M4N5</accession>
<accession>Q99M33</accession>
<evidence type="ECO:0000250" key="1"/>
<evidence type="ECO:0000250" key="2">
    <source>
        <dbReference type="UniProtKB" id="O75525"/>
    </source>
</evidence>
<evidence type="ECO:0000250" key="3">
    <source>
        <dbReference type="UniProtKB" id="Q07666"/>
    </source>
</evidence>
<evidence type="ECO:0000250" key="4">
    <source>
        <dbReference type="UniProtKB" id="Q91V33"/>
    </source>
</evidence>
<evidence type="ECO:0000255" key="5"/>
<evidence type="ECO:0000255" key="6">
    <source>
        <dbReference type="PROSITE-ProRule" id="PRU00117"/>
    </source>
</evidence>
<evidence type="ECO:0000256" key="7">
    <source>
        <dbReference type="SAM" id="MobiDB-lite"/>
    </source>
</evidence>
<evidence type="ECO:0000269" key="8">
    <source>
    </source>
</evidence>
<evidence type="ECO:0000269" key="9">
    <source>
    </source>
</evidence>
<evidence type="ECO:0000269" key="10">
    <source>
    </source>
</evidence>
<evidence type="ECO:0000269" key="11">
    <source>
    </source>
</evidence>
<evidence type="ECO:0000269" key="12">
    <source>
    </source>
</evidence>
<evidence type="ECO:0000269" key="13">
    <source>
    </source>
</evidence>
<evidence type="ECO:0000269" key="14">
    <source>
    </source>
</evidence>
<evidence type="ECO:0000269" key="15">
    <source>
    </source>
</evidence>
<evidence type="ECO:0000269" key="16">
    <source>
    </source>
</evidence>
<evidence type="ECO:0000269" key="17">
    <source>
    </source>
</evidence>
<evidence type="ECO:0000269" key="18">
    <source>
    </source>
</evidence>
<evidence type="ECO:0000305" key="19"/>
<evidence type="ECO:0000312" key="20">
    <source>
        <dbReference type="EMBL" id="AAA64997.1"/>
    </source>
</evidence>
<evidence type="ECO:0000312" key="21">
    <source>
        <dbReference type="EMBL" id="AAA86693.1"/>
    </source>
</evidence>
<evidence type="ECO:0000312" key="22">
    <source>
        <dbReference type="EMBL" id="AAH02051.1"/>
    </source>
</evidence>
<evidence type="ECO:0000312" key="23">
    <source>
        <dbReference type="EMBL" id="BAC34303.1"/>
    </source>
</evidence>
<evidence type="ECO:0000312" key="24">
    <source>
        <dbReference type="MGI" id="MGI:893579"/>
    </source>
</evidence>
<evidence type="ECO:0007744" key="25">
    <source>
    </source>
</evidence>
<evidence type="ECO:0007744" key="26">
    <source>
    </source>
</evidence>
<feature type="chain" id="PRO_0000050125" description="KH domain-containing, RNA-binding, signal transduction-associated protein 1">
    <location>
        <begin position="1"/>
        <end position="443"/>
    </location>
</feature>
<feature type="domain" description="KH" evidence="6">
    <location>
        <begin position="171"/>
        <end position="197"/>
    </location>
</feature>
<feature type="region of interest" description="Disordered" evidence="7">
    <location>
        <begin position="1"/>
        <end position="94"/>
    </location>
</feature>
<feature type="region of interest" description="Involved in homodimerization" evidence="3">
    <location>
        <begin position="100"/>
        <end position="260"/>
    </location>
</feature>
<feature type="region of interest" description="Disordered" evidence="7">
    <location>
        <begin position="280"/>
        <end position="317"/>
    </location>
</feature>
<feature type="region of interest" description="Disordered" evidence="7">
    <location>
        <begin position="326"/>
        <end position="345"/>
    </location>
</feature>
<feature type="region of interest" description="Interaction with HNRNPA1" evidence="3">
    <location>
        <begin position="351"/>
        <end position="443"/>
    </location>
</feature>
<feature type="region of interest" description="Interaction with ZBTB7A" evidence="3">
    <location>
        <begin position="400"/>
        <end position="420"/>
    </location>
</feature>
<feature type="region of interest" description="Disordered" evidence="7">
    <location>
        <begin position="411"/>
        <end position="443"/>
    </location>
</feature>
<feature type="compositionally biased region" description="Pro residues" evidence="7">
    <location>
        <begin position="61"/>
        <end position="72"/>
    </location>
</feature>
<feature type="compositionally biased region" description="Low complexity" evidence="7">
    <location>
        <begin position="81"/>
        <end position="94"/>
    </location>
</feature>
<feature type="compositionally biased region" description="Low complexity" evidence="7">
    <location>
        <begin position="283"/>
        <end position="293"/>
    </location>
</feature>
<feature type="compositionally biased region" description="Low complexity" evidence="7">
    <location>
        <begin position="307"/>
        <end position="316"/>
    </location>
</feature>
<feature type="compositionally biased region" description="Basic and acidic residues" evidence="7">
    <location>
        <begin position="434"/>
        <end position="443"/>
    </location>
</feature>
<feature type="modified residue" description="Phosphoserine" evidence="3">
    <location>
        <position position="18"/>
    </location>
</feature>
<feature type="modified residue" description="Phosphoserine" evidence="3">
    <location>
        <position position="20"/>
    </location>
</feature>
<feature type="modified residue" description="N6-acetyllysine" evidence="25">
    <location>
        <position position="21"/>
    </location>
</feature>
<feature type="modified residue" description="Phosphoserine" evidence="3">
    <location>
        <position position="29"/>
    </location>
</feature>
<feature type="modified residue" description="Phosphothreonine" evidence="3">
    <location>
        <position position="33"/>
    </location>
</feature>
<feature type="modified residue" description="Asymmetric dimethylarginine; by PRMT1" evidence="3">
    <location>
        <position position="45"/>
    </location>
</feature>
<feature type="modified residue" description="Asymmetric dimethylarginine; by PRMT1" evidence="3">
    <location>
        <position position="52"/>
    </location>
</feature>
<feature type="modified residue" description="Phosphoserine; by MAPK1" evidence="9">
    <location>
        <position position="58"/>
    </location>
</feature>
<feature type="modified residue" description="Phosphothreonine; by MAPK1" evidence="9">
    <location>
        <position position="71"/>
    </location>
</feature>
<feature type="modified residue" description="Phosphothreonine; by MAPK1" evidence="9">
    <location>
        <position position="84"/>
    </location>
</feature>
<feature type="modified residue" description="Phosphoserine" evidence="15">
    <location>
        <position position="113"/>
    </location>
</feature>
<feature type="modified residue" description="Phosphoserine" evidence="3">
    <location>
        <position position="150"/>
    </location>
</feature>
<feature type="modified residue" description="N6-acetyllysine; alternate" evidence="3">
    <location>
        <position position="175"/>
    </location>
</feature>
<feature type="modified residue" description="Phosphothreonine" evidence="3">
    <location>
        <position position="183"/>
    </location>
</feature>
<feature type="modified residue" description="Omega-N-methylarginine" evidence="26">
    <location>
        <position position="282"/>
    </location>
</feature>
<feature type="modified residue" description="Omega-N-methylarginine" evidence="26">
    <location>
        <position position="284"/>
    </location>
</feature>
<feature type="modified residue" description="Omega-N-methylarginine" evidence="26">
    <location>
        <position position="291"/>
    </location>
</feature>
<feature type="modified residue" description="Asymmetric dimethylarginine" evidence="3">
    <location>
        <position position="304"/>
    </location>
</feature>
<feature type="modified residue" description="Omega-N-methylarginine; by PRMT1" evidence="3">
    <location>
        <position position="310"/>
    </location>
</feature>
<feature type="modified residue" description="Omega-N-methylarginine; by PRMT1" evidence="3">
    <location>
        <position position="315"/>
    </location>
</feature>
<feature type="modified residue" description="Dimethylated arginine; alternate" evidence="3">
    <location>
        <position position="320"/>
    </location>
</feature>
<feature type="modified residue" description="Omega-N-methylarginine; by PRMT1; alternate" evidence="3">
    <location>
        <position position="320"/>
    </location>
</feature>
<feature type="modified residue" description="Omega-N-methylarginine; by PRMT1" evidence="3">
    <location>
        <position position="325"/>
    </location>
</feature>
<feature type="modified residue" description="Asymmetric dimethylarginine; alternate" evidence="26">
    <location>
        <position position="331"/>
    </location>
</feature>
<feature type="modified residue" description="Dimethylated arginine; alternate" evidence="3">
    <location>
        <position position="331"/>
    </location>
</feature>
<feature type="modified residue" description="Omega-N-methylarginine; by PRMT1; alternate" evidence="3">
    <location>
        <position position="331"/>
    </location>
</feature>
<feature type="modified residue" description="Dimethylated arginine; alternate" evidence="3">
    <location>
        <position position="340"/>
    </location>
</feature>
<feature type="modified residue" description="Omega-N-methylarginine; by PRMT1; alternate" evidence="3">
    <location>
        <position position="340"/>
    </location>
</feature>
<feature type="modified residue" description="Phosphotyrosine" evidence="3">
    <location>
        <position position="387"/>
    </location>
</feature>
<feature type="modified residue" description="Phosphoserine" evidence="3">
    <location>
        <position position="390"/>
    </location>
</feature>
<feature type="modified residue" description="Phosphotyrosine; by PTK6" evidence="3">
    <location>
        <position position="435"/>
    </location>
</feature>
<feature type="modified residue" description="Phosphotyrosine; by PTK6" evidence="3">
    <location>
        <position position="440"/>
    </location>
</feature>
<feature type="modified residue" description="Phosphotyrosine; by PTK6" evidence="3">
    <location>
        <position position="443"/>
    </location>
</feature>
<feature type="cross-link" description="Glycyl lysine isopeptide (Lys-Gly) (interchain with G-Cter in SUMO2)" evidence="3">
    <location>
        <position position="96"/>
    </location>
</feature>
<feature type="cross-link" description="Glycyl lysine isopeptide (Lys-Gly) (interchain with G-Cter in SUMO2)" evidence="3">
    <location>
        <position position="102"/>
    </location>
</feature>
<feature type="cross-link" description="Glycyl lysine isopeptide (Lys-Gly) (interchain with G-Cter in SUMO2)" evidence="3">
    <location>
        <position position="139"/>
    </location>
</feature>
<feature type="cross-link" description="Glycyl lysine isopeptide (Lys-Gly) (interchain with G-Cter in SUMO2); alternate" evidence="3">
    <location>
        <position position="175"/>
    </location>
</feature>
<feature type="cross-link" description="Glycyl lysine isopeptide (Lys-Gly) (interchain with G-Cter in SUMO2)" evidence="3">
    <location>
        <position position="432"/>
    </location>
</feature>
<feature type="mutagenesis site" description="Abolishes phosphorylation, abolishes CD44 splicing regulation; when associated with A-71 and A-84." evidence="9">
    <original>S</original>
    <variation>A</variation>
    <location>
        <position position="58"/>
    </location>
</feature>
<feature type="mutagenesis site" description="Abolishes phosphorylation, abolishes CD44 splicing regulation; when associated with A-58 and A-84." evidence="9">
    <original>T</original>
    <variation>A</variation>
    <location>
        <position position="71"/>
    </location>
</feature>
<feature type="mutagenesis site" description="Abolishes phosphorylation, abolishes CD44 splicing regulation; when associated with A-58 and A-71." evidence="9">
    <original>T</original>
    <variation>A</variation>
    <location>
        <position position="84"/>
    </location>
</feature>
<feature type="mutagenesis site" description="Abolishes splicing regulation." evidence="13">
    <original>V</original>
    <variation>F</variation>
    <location>
        <position position="229"/>
    </location>
</feature>
<feature type="sequence conflict" description="In Ref. 2; AAA64997." evidence="19" ref="2">
    <original>L</original>
    <variation>P</variation>
    <location>
        <position position="104"/>
    </location>
</feature>
<feature type="sequence conflict" description="In Ref. 6; AA sequence." evidence="19" ref="6">
    <original>D</original>
    <variation>N</variation>
    <location>
        <position position="147"/>
    </location>
</feature>
<feature type="sequence conflict" description="In Ref. 1; AAA86693." evidence="19" ref="1">
    <original>G</original>
    <variation>R</variation>
    <location>
        <position position="174"/>
    </location>
</feature>
<feature type="sequence conflict" description="In Ref. 1; AAA86693." evidence="19" ref="1">
    <original>V</original>
    <variation>VS</variation>
    <location>
        <position position="197"/>
    </location>
</feature>
<feature type="sequence conflict" description="In Ref. 6; AA sequence." evidence="19" ref="6">
    <original>MDLHVF</original>
    <variation>LGENGL</variation>
    <location>
        <begin position="225"/>
        <end position="230"/>
    </location>
</feature>
<feature type="sequence conflict" description="In Ref. 1; AAA86693." evidence="19" ref="1">
    <original>A</original>
    <variation>S</variation>
    <location>
        <position position="327"/>
    </location>
</feature>
<keyword id="KW-0007">Acetylation</keyword>
<keyword id="KW-0131">Cell cycle</keyword>
<keyword id="KW-0963">Cytoplasm</keyword>
<keyword id="KW-0903">Direct protein sequencing</keyword>
<keyword id="KW-1017">Isopeptide bond</keyword>
<keyword id="KW-0472">Membrane</keyword>
<keyword id="KW-0488">Methylation</keyword>
<keyword id="KW-0507">mRNA processing</keyword>
<keyword id="KW-0539">Nucleus</keyword>
<keyword id="KW-0597">Phosphoprotein</keyword>
<keyword id="KW-1185">Reference proteome</keyword>
<keyword id="KW-0694">RNA-binding</keyword>
<keyword id="KW-0729">SH3-binding</keyword>
<keyword id="KW-0804">Transcription</keyword>
<keyword id="KW-0805">Transcription regulation</keyword>
<keyword id="KW-0832">Ubl conjugation</keyword>
<comment type="function">
    <text evidence="2 9 10 12 14 15 18">Recruited and tyrosine phosphorylated by several receptor systems, for example the T-cell, leptin and insulin receptors. Once phosphorylated, functions as an adapter protein in signal transduction cascades by binding to SH2 and SH3 domain-containing proteins. Role in G2-M progression in the cell cycle. Represses CBP-dependent transcriptional activation apparently by competing with other nuclear factors for binding to CBP. Also acts as a putative regulator of mRNA stability and/or translation rates and mediates mRNA nuclear export. Positively regulates the association of constitutive transport element (CTE)-containing mRNA with large polyribosomes and translation initiation. May not be involved in the nucleocytoplasmic export of unspliced (CTE)-containing RNA species. RNA-binding protein that plays a role in the regulation of alternative splicing and influences mRNA splice site selection and exon inclusion. Binds to RNA containing 5'-[AU]UAA-3' as a bipartite motif spaced by more than 15 nucleotides. Binds poly(A). In cooperation with HNRNPA1 modulates alternative splicing of BCL2L1 by promoting splicing toward isoform Bcl-X(S), and of SMN1 (By similarity). Can regulate CD44 alternative splicing in a Ras pathway-dependent manner. Can regulate alternative splicing of NRXN1 and NRXN3 in the laminin G-like domain 6 containing the evolutionary conserved neurexin alternative spliced segment 4 (AS4) involved in neurexin selective targeting to postsynaptic partners. In a neuronal activity-dependent manner cooperates synergistically with KHDRBS2/SLIM-1 in regulation of NRXN1 exon skipping at AS4. The cooperation with KHDRBS2/SLIM-1 is antagonistic for regulation of NXRN3 alternative splicing at AS4 (PubMed:12478298, PubMed:22196734, PubMed:24469635).</text>
</comment>
<comment type="subunit">
    <text evidence="3 4 8 10 11 14 15 17 18">Self-associates to form homooligomers when bound to RNA, oligomerization appears to be limited when binding to proteins (PubMed:9315629). Forms a trimeric complex in the nucleus consisting of BANP, HDAC6 and KHDRBS1/SAM68; HDAC6 keeps KHDRBS1 in a deacetylated state which inhibits the inclusion of CD44 alternate exons (By similarity). The complex is disrupted by MAPK1/MAPK3-mediated phosphorylation of BANP which results in BANP export to the cytoplasm (By similarity). This facilitates acetylation of KHDRBS1 and CD44 variant exon inclusion (By similarity). Interacts with KHDRBS3/SLIM-2 and KHDRBS2/SLIM-1; heterooligomer formation of KHDRBS family proteins may modulate RNA substrate specificity (PubMed:10077576, PubMed:24469635). Interacts with RASA1, FYN, GRB2, PLCG1, SRC, CBP and PRMT1 (PubMed:10077576, PubMed:12496368, PubMed:12529443, PubMed:7512695, PubMed:7799925). Interacts with PTK6 (via SH3 and SH2 domains). Forms a complex with ILF2, ILF3, YLPM1, RBMX, NCOA5 and PPP1CA. Binds WBP4/FBP21 (via WW domains), FNBP4/FBP30 (via WW domains). Interacts (via Arg/Gly-rich-flanked Pro-rich regions) with FYN (via the SH3 domain). Interacts with APC, HNRNPA1 (By similarity). Interacts with the non-receptor tyrosine kinase SRMS; the interaction leads to phosphorylation of KHDRBS1 (By similarity). Interacts with ZBTB7A; negatively regulates KHDRBS1 splicing activity toward BCL2L1 (By similarity).</text>
</comment>
<comment type="interaction">
    <interactant intactId="EBI-519077">
        <id>Q60749</id>
    </interactant>
    <interactant intactId="EBI-296306">
        <id>P45481</id>
        <label>Crebbp</label>
    </interactant>
    <organismsDiffer>false</organismsDiffer>
    <experiments>7</experiments>
</comment>
<comment type="interaction">
    <interactant intactId="EBI-519077">
        <id>Q60749</id>
    </interactant>
    <interactant intactId="EBI-524514">
        <id>P39688</id>
        <label>Fyn</label>
    </interactant>
    <organismsDiffer>false</organismsDiffer>
    <experiments>15</experiments>
</comment>
<comment type="interaction">
    <interactant intactId="EBI-519077">
        <id>Q60749</id>
    </interactant>
    <interactant intactId="EBI-1688">
        <id>Q60631</id>
        <label>Grb2</label>
    </interactant>
    <organismsDiffer>false</organismsDiffer>
    <experiments>2</experiments>
</comment>
<comment type="interaction">
    <interactant intactId="EBI-519077">
        <id>Q60749</id>
    </interactant>
    <interactant intactId="EBI-519077">
        <id>Q60749</id>
        <label>Khdrbs1</label>
    </interactant>
    <organismsDiffer>false</organismsDiffer>
    <experiments>2</experiments>
</comment>
<comment type="interaction">
    <interactant intactId="EBI-519077">
        <id>Q60749</id>
    </interactant>
    <interactant intactId="EBI-519055">
        <id>Q9JIF0</id>
        <label>Prmt1</label>
    </interactant>
    <organismsDiffer>false</organismsDiffer>
    <experiments>2</experiments>
</comment>
<comment type="interaction">
    <interactant intactId="EBI-519077">
        <id>Q60749</id>
    </interactant>
    <interactant intactId="EBI-520788">
        <id>P10686</id>
        <label>Plcg1</label>
    </interactant>
    <organismsDiffer>true</organismsDiffer>
    <experiments>2</experiments>
</comment>
<comment type="subcellular location">
    <subcellularLocation>
        <location evidence="10">Nucleus</location>
    </subcellularLocation>
    <subcellularLocation>
        <location evidence="3">Cytoplasm</location>
    </subcellularLocation>
    <subcellularLocation>
        <location evidence="10">Membrane</location>
    </subcellularLocation>
    <text evidence="3">Predominantly located in the nucleus but also located partially in the cytoplasm.</text>
</comment>
<comment type="tissue specificity">
    <text evidence="12">In adult cerebellum expressed in most neuronal cell populations, specifically in cerebellar granule cells of the internal granular layer, ROR(alpha)-positive Purkinje cells, internal granular layer and molecular layer interneurons (at protein level).</text>
</comment>
<comment type="developmental stage">
    <text evidence="12">In the developing cerebellum expression is high at birth and declines over the first 3 weeks. At P7 highly expressed in granule cell precursor cells in the external granular layer and mature granule cells of the internal granule layer.</text>
</comment>
<comment type="domain">
    <text evidence="18">The KH domain is required for binding to RNA.</text>
</comment>
<comment type="domain">
    <text evidence="1">The Pro-rich domains are flanked by Arg/Gly-rich motifs which can be asymmetric dimethylated on arginine residues to give the DMA/Gly-rich regions. Selective methylation on these motifs can modulate protein-protein interactions (By similarity).</text>
</comment>
<comment type="PTM">
    <text evidence="3 9 15">Tyrosine phosphorylated by several non-receptor tyrosine kinases including LCK, FYN and JAK3. Also tyrosine phosphorylated by the non-receptor tyrosine kinase SRMS in an EGF-dependent manner (By similarity). Phosphorylation by PTK6 negatively regulates its RNA binding ability. Phosphorylation by PTK6 at Tyr-440 dictates the nuclear localization of KHDRBS1. Phosphorylation by MAPK1 at Ser-58, Thr-71 and Thr-84 regulates CD44 alternative splicing by promoting CD44 exon v5 inclusion.</text>
</comment>
<comment type="PTM">
    <text evidence="3">Acetylated. Positively correlates with ability to bind RNA. Deacetylated by HDAC6; this regulates alternative splicing by inhibiting the inclusion of CD44 alternate exons.</text>
</comment>
<comment type="PTM">
    <text evidence="3">Arginine methylation is required for nuclear localization. Inhibits interaction with Src-like SH3 domains, but not interaction with WW domains of WBP4/FBP21 and FNBP4/FBP30 (By similarity).</text>
</comment>
<comment type="similarity">
    <text evidence="5">Belongs to the KHDRBS family.</text>
</comment>
<proteinExistence type="evidence at protein level"/>
<organism>
    <name type="scientific">Mus musculus</name>
    <name type="common">Mouse</name>
    <dbReference type="NCBI Taxonomy" id="10090"/>
    <lineage>
        <taxon>Eukaryota</taxon>
        <taxon>Metazoa</taxon>
        <taxon>Chordata</taxon>
        <taxon>Craniata</taxon>
        <taxon>Vertebrata</taxon>
        <taxon>Euteleostomi</taxon>
        <taxon>Mammalia</taxon>
        <taxon>Eutheria</taxon>
        <taxon>Euarchontoglires</taxon>
        <taxon>Glires</taxon>
        <taxon>Rodentia</taxon>
        <taxon>Myomorpha</taxon>
        <taxon>Muroidea</taxon>
        <taxon>Muridae</taxon>
        <taxon>Murinae</taxon>
        <taxon>Mus</taxon>
        <taxon>Mus</taxon>
    </lineage>
</organism>
<sequence>MQRRDDPASRLTRSSGRSCSKDPSGAHPSVRLTPSRPSPLPHRPRGGGGGPRGGARASPATQPPPLLPPSTPGPDATVVGSAPTPLLPPSATAAVKMEPENKYLPELMAEKDSLDPSFTHAMQLLSVEIEKIQKGESKKDDEENYLDLFSHKNMKLKERVLIPVKQYPKFNFVGKILGPQGNTIKRLQEETGAKISVLGKGSMRDKAKEEELRKGGDPKYAHLNMDLHVFIEVFGPPCEAYALMAHAMEEVKKFLVPDMMDDICQEQFLELSYLNGVPEPSRGRGVSVRGRGAAPPPPPVPRGRGVGPPRGALVRGTPVRGSITRGATVTRGVPPPPTVRGAPTPRARTAGIQRIPLPPTPAPETYEDYGYDDTYAEQSYEGYEGYYSQSQGESEYYDYGHGELQDSYEAYGQDDWNGTRPSLKAPPARPVKGAYREHPYGRY</sequence>
<dbReference type="EMBL" id="U17961">
    <property type="protein sequence ID" value="AAA86693.1"/>
    <property type="molecule type" value="mRNA"/>
</dbReference>
<dbReference type="EMBL" id="U17046">
    <property type="protein sequence ID" value="AAA64997.1"/>
    <property type="molecule type" value="mRNA"/>
</dbReference>
<dbReference type="EMBL" id="AK050520">
    <property type="protein sequence ID" value="BAC34303.1"/>
    <property type="molecule type" value="mRNA"/>
</dbReference>
<dbReference type="EMBL" id="AK152084">
    <property type="protein sequence ID" value="BAE30934.1"/>
    <property type="molecule type" value="mRNA"/>
</dbReference>
<dbReference type="EMBL" id="AL669834">
    <property type="status" value="NOT_ANNOTATED_CDS"/>
    <property type="molecule type" value="Genomic_DNA"/>
</dbReference>
<dbReference type="EMBL" id="CU210913">
    <property type="status" value="NOT_ANNOTATED_CDS"/>
    <property type="molecule type" value="Genomic_DNA"/>
</dbReference>
<dbReference type="EMBL" id="BC002051">
    <property type="protein sequence ID" value="AAH02051.1"/>
    <property type="molecule type" value="mRNA"/>
</dbReference>
<dbReference type="CCDS" id="CCDS18703.1"/>
<dbReference type="PIR" id="I49140">
    <property type="entry name" value="I49140"/>
</dbReference>
<dbReference type="PIR" id="S43974">
    <property type="entry name" value="S43974"/>
</dbReference>
<dbReference type="RefSeq" id="NP_035447.3">
    <property type="nucleotide sequence ID" value="NM_011317.4"/>
</dbReference>
<dbReference type="SMR" id="Q60749"/>
<dbReference type="BioGRID" id="203068">
    <property type="interactions" value="24"/>
</dbReference>
<dbReference type="CORUM" id="Q60749"/>
<dbReference type="DIP" id="DIP-2861N"/>
<dbReference type="FunCoup" id="Q60749">
    <property type="interactions" value="4637"/>
</dbReference>
<dbReference type="IntAct" id="Q60749">
    <property type="interactions" value="25"/>
</dbReference>
<dbReference type="MINT" id="Q60749"/>
<dbReference type="STRING" id="10090.ENSMUSP00000066516"/>
<dbReference type="GlyGen" id="Q60749">
    <property type="glycosylation" value="3 sites, 1 O-linked glycan (1 site)"/>
</dbReference>
<dbReference type="iPTMnet" id="Q60749"/>
<dbReference type="PhosphoSitePlus" id="Q60749"/>
<dbReference type="SwissPalm" id="Q60749"/>
<dbReference type="jPOST" id="Q60749"/>
<dbReference type="PaxDb" id="10090-ENSMUSP00000066516"/>
<dbReference type="PeptideAtlas" id="Q60749"/>
<dbReference type="ProteomicsDB" id="269213"/>
<dbReference type="Pumba" id="Q60749"/>
<dbReference type="Antibodypedia" id="3944">
    <property type="antibodies" value="338 antibodies from 39 providers"/>
</dbReference>
<dbReference type="DNASU" id="20218"/>
<dbReference type="Ensembl" id="ENSMUST00000066257.6">
    <property type="protein sequence ID" value="ENSMUSP00000066516.6"/>
    <property type="gene ID" value="ENSMUSG00000028790.14"/>
</dbReference>
<dbReference type="Ensembl" id="ENSMUST00000129342.8">
    <property type="protein sequence ID" value="ENSMUSP00000115402.2"/>
    <property type="gene ID" value="ENSMUSG00000028790.14"/>
</dbReference>
<dbReference type="GeneID" id="20218"/>
<dbReference type="KEGG" id="mmu:20218"/>
<dbReference type="UCSC" id="uc008uyd.2">
    <property type="organism name" value="mouse"/>
</dbReference>
<dbReference type="AGR" id="MGI:893579"/>
<dbReference type="CTD" id="10657"/>
<dbReference type="MGI" id="MGI:893579">
    <property type="gene designation" value="Khdrbs1"/>
</dbReference>
<dbReference type="VEuPathDB" id="HostDB:ENSMUSG00000028790"/>
<dbReference type="eggNOG" id="KOG1588">
    <property type="taxonomic scope" value="Eukaryota"/>
</dbReference>
<dbReference type="GeneTree" id="ENSGT00940000155718"/>
<dbReference type="HOGENOM" id="CLU_034976_0_0_1"/>
<dbReference type="InParanoid" id="Q60749"/>
<dbReference type="OMA" id="GYDENYT"/>
<dbReference type="OrthoDB" id="6777263at2759"/>
<dbReference type="PhylomeDB" id="Q60749"/>
<dbReference type="TreeFam" id="TF314878"/>
<dbReference type="Reactome" id="R-MMU-8849468">
    <property type="pathway name" value="PTK6 Regulates Proteins Involved in RNA Processing"/>
</dbReference>
<dbReference type="BioGRID-ORCS" id="20218">
    <property type="hits" value="10 hits in 81 CRISPR screens"/>
</dbReference>
<dbReference type="CD-CODE" id="CE726F99">
    <property type="entry name" value="Postsynaptic density"/>
</dbReference>
<dbReference type="CD-CODE" id="DE1E139C">
    <property type="entry name" value="Chromatoid body"/>
</dbReference>
<dbReference type="ChiTaRS" id="Khdrbs1">
    <property type="organism name" value="mouse"/>
</dbReference>
<dbReference type="PRO" id="PR:Q60749"/>
<dbReference type="Proteomes" id="UP000000589">
    <property type="component" value="Chromosome 4"/>
</dbReference>
<dbReference type="RNAct" id="Q60749">
    <property type="molecule type" value="protein"/>
</dbReference>
<dbReference type="Bgee" id="ENSMUSG00000028790">
    <property type="expression patterns" value="Expressed in frontonasal prominence and 256 other cell types or tissues"/>
</dbReference>
<dbReference type="GO" id="GO:0005737">
    <property type="term" value="C:cytoplasm"/>
    <property type="evidence" value="ECO:0000250"/>
    <property type="project" value="UniProtKB"/>
</dbReference>
<dbReference type="GO" id="GO:0070618">
    <property type="term" value="C:Grb2-Sos complex"/>
    <property type="evidence" value="ECO:0007669"/>
    <property type="project" value="Ensembl"/>
</dbReference>
<dbReference type="GO" id="GO:0016020">
    <property type="term" value="C:membrane"/>
    <property type="evidence" value="ECO:0000250"/>
    <property type="project" value="UniProtKB"/>
</dbReference>
<dbReference type="GO" id="GO:0005654">
    <property type="term" value="C:nucleoplasm"/>
    <property type="evidence" value="ECO:0007669"/>
    <property type="project" value="Ensembl"/>
</dbReference>
<dbReference type="GO" id="GO:0005634">
    <property type="term" value="C:nucleus"/>
    <property type="evidence" value="ECO:0000314"/>
    <property type="project" value="MGI"/>
</dbReference>
<dbReference type="GO" id="GO:0042802">
    <property type="term" value="F:identical protein binding"/>
    <property type="evidence" value="ECO:0000353"/>
    <property type="project" value="IntAct"/>
</dbReference>
<dbReference type="GO" id="GO:0008143">
    <property type="term" value="F:poly(A) binding"/>
    <property type="evidence" value="ECO:0000266"/>
    <property type="project" value="MGI"/>
</dbReference>
<dbReference type="GO" id="GO:0008266">
    <property type="term" value="F:poly(U) RNA binding"/>
    <property type="evidence" value="ECO:0000266"/>
    <property type="project" value="MGI"/>
</dbReference>
<dbReference type="GO" id="GO:1990782">
    <property type="term" value="F:protein tyrosine kinase binding"/>
    <property type="evidence" value="ECO:0000353"/>
    <property type="project" value="UniProtKB"/>
</dbReference>
<dbReference type="GO" id="GO:0044877">
    <property type="term" value="F:protein-containing complex binding"/>
    <property type="evidence" value="ECO:0007669"/>
    <property type="project" value="Ensembl"/>
</dbReference>
<dbReference type="GO" id="GO:0003723">
    <property type="term" value="F:RNA binding"/>
    <property type="evidence" value="ECO:0000314"/>
    <property type="project" value="UniProtKB"/>
</dbReference>
<dbReference type="GO" id="GO:0042169">
    <property type="term" value="F:SH2 domain binding"/>
    <property type="evidence" value="ECO:0007669"/>
    <property type="project" value="Ensembl"/>
</dbReference>
<dbReference type="GO" id="GO:0017124">
    <property type="term" value="F:SH3 domain binding"/>
    <property type="evidence" value="ECO:0007669"/>
    <property type="project" value="UniProtKB-KW"/>
</dbReference>
<dbReference type="GO" id="GO:0035591">
    <property type="term" value="F:signaling adaptor activity"/>
    <property type="evidence" value="ECO:0000314"/>
    <property type="project" value="UniProtKB"/>
</dbReference>
<dbReference type="GO" id="GO:0007166">
    <property type="term" value="P:cell surface receptor signaling pathway"/>
    <property type="evidence" value="ECO:0000314"/>
    <property type="project" value="UniProtKB"/>
</dbReference>
<dbReference type="GO" id="GO:0006397">
    <property type="term" value="P:mRNA processing"/>
    <property type="evidence" value="ECO:0007669"/>
    <property type="project" value="UniProtKB-KW"/>
</dbReference>
<dbReference type="GO" id="GO:0000122">
    <property type="term" value="P:negative regulation of transcription by RNA polymerase II"/>
    <property type="evidence" value="ECO:0000314"/>
    <property type="project" value="MGI"/>
</dbReference>
<dbReference type="GO" id="GO:0046833">
    <property type="term" value="P:positive regulation of RNA export from nucleus"/>
    <property type="evidence" value="ECO:0000250"/>
    <property type="project" value="UniProtKB"/>
</dbReference>
<dbReference type="GO" id="GO:0045948">
    <property type="term" value="P:positive regulation of translational initiation"/>
    <property type="evidence" value="ECO:0000250"/>
    <property type="project" value="UniProtKB"/>
</dbReference>
<dbReference type="GO" id="GO:0000381">
    <property type="term" value="P:regulation of alternative mRNA splicing, via spliceosome"/>
    <property type="evidence" value="ECO:0000250"/>
    <property type="project" value="UniProtKB"/>
</dbReference>
<dbReference type="GO" id="GO:0042981">
    <property type="term" value="P:regulation of apoptotic process"/>
    <property type="evidence" value="ECO:0007669"/>
    <property type="project" value="Ensembl"/>
</dbReference>
<dbReference type="GO" id="GO:0051726">
    <property type="term" value="P:regulation of cell cycle"/>
    <property type="evidence" value="ECO:0007669"/>
    <property type="project" value="Ensembl"/>
</dbReference>
<dbReference type="GO" id="GO:0048024">
    <property type="term" value="P:regulation of mRNA splicing, via spliceosome"/>
    <property type="evidence" value="ECO:0000314"/>
    <property type="project" value="UniProtKB"/>
</dbReference>
<dbReference type="GO" id="GO:0046831">
    <property type="term" value="P:regulation of RNA export from nucleus"/>
    <property type="evidence" value="ECO:0000314"/>
    <property type="project" value="MGI"/>
</dbReference>
<dbReference type="GO" id="GO:0007283">
    <property type="term" value="P:spermatogenesis"/>
    <property type="evidence" value="ECO:0007669"/>
    <property type="project" value="Ensembl"/>
</dbReference>
<dbReference type="GO" id="GO:0050852">
    <property type="term" value="P:T cell receptor signaling pathway"/>
    <property type="evidence" value="ECO:0007669"/>
    <property type="project" value="Ensembl"/>
</dbReference>
<dbReference type="CDD" id="cd22468">
    <property type="entry name" value="KH-I_KHDRBS1"/>
    <property type="match status" value="1"/>
</dbReference>
<dbReference type="FunFam" id="3.30.1370.10:FF:000036">
    <property type="entry name" value="KH RNA binding domain containing, signal transduction associated 1"/>
    <property type="match status" value="1"/>
</dbReference>
<dbReference type="Gene3D" id="3.30.1370.10">
    <property type="entry name" value="K Homology domain, type 1"/>
    <property type="match status" value="1"/>
</dbReference>
<dbReference type="InterPro" id="IPR045071">
    <property type="entry name" value="BBP-like"/>
</dbReference>
<dbReference type="InterPro" id="IPR055256">
    <property type="entry name" value="KH_1_KHDC4/BBP-like"/>
</dbReference>
<dbReference type="InterPro" id="IPR004087">
    <property type="entry name" value="KH_dom"/>
</dbReference>
<dbReference type="InterPro" id="IPR036612">
    <property type="entry name" value="KH_dom_type_1_sf"/>
</dbReference>
<dbReference type="InterPro" id="IPR032571">
    <property type="entry name" value="Qua1_dom"/>
</dbReference>
<dbReference type="InterPro" id="IPR032335">
    <property type="entry name" value="Sam68-YY"/>
</dbReference>
<dbReference type="PANTHER" id="PTHR11208:SF30">
    <property type="entry name" value="KH DOMAIN-CONTAINING, RNA-BINDING, SIGNAL TRANSDUCTION-ASSOCIATED PROTEIN 1"/>
    <property type="match status" value="1"/>
</dbReference>
<dbReference type="PANTHER" id="PTHR11208">
    <property type="entry name" value="RNA-BINDING PROTEIN RELATED"/>
    <property type="match status" value="1"/>
</dbReference>
<dbReference type="Pfam" id="PF22675">
    <property type="entry name" value="KH-I_KHDC4-BBP"/>
    <property type="match status" value="1"/>
</dbReference>
<dbReference type="Pfam" id="PF16274">
    <property type="entry name" value="Qua1"/>
    <property type="match status" value="1"/>
</dbReference>
<dbReference type="Pfam" id="PF16568">
    <property type="entry name" value="Sam68-YY"/>
    <property type="match status" value="1"/>
</dbReference>
<dbReference type="SMART" id="SM00322">
    <property type="entry name" value="KH"/>
    <property type="match status" value="1"/>
</dbReference>
<dbReference type="SUPFAM" id="SSF54791">
    <property type="entry name" value="Eukaryotic type KH-domain (KH-domain type I)"/>
    <property type="match status" value="1"/>
</dbReference>
<dbReference type="PROSITE" id="PS50084">
    <property type="entry name" value="KH_TYPE_1"/>
    <property type="match status" value="1"/>
</dbReference>